<keyword id="KW-0150">Chloroplast</keyword>
<keyword id="KW-0934">Plastid</keyword>
<keyword id="KW-0687">Ribonucleoprotein</keyword>
<keyword id="KW-0689">Ribosomal protein</keyword>
<keyword id="KW-0694">RNA-binding</keyword>
<keyword id="KW-0699">rRNA-binding</keyword>
<feature type="chain" id="PRO_0000277040" description="Small ribosomal subunit protein uS7cz/uS7cy">
    <location>
        <begin position="1"/>
        <end position="155"/>
    </location>
</feature>
<protein>
    <recommendedName>
        <fullName evidence="2">Small ribosomal subunit protein uS7cz/uS7cy</fullName>
    </recommendedName>
    <alternativeName>
        <fullName>30S ribosomal protein S7, chloroplastic</fullName>
    </alternativeName>
</protein>
<organism>
    <name type="scientific">Gossypium barbadense</name>
    <name type="common">Sea Island cotton</name>
    <name type="synonym">Hibiscus barbadensis</name>
    <dbReference type="NCBI Taxonomy" id="3634"/>
    <lineage>
        <taxon>Eukaryota</taxon>
        <taxon>Viridiplantae</taxon>
        <taxon>Streptophyta</taxon>
        <taxon>Embryophyta</taxon>
        <taxon>Tracheophyta</taxon>
        <taxon>Spermatophyta</taxon>
        <taxon>Magnoliopsida</taxon>
        <taxon>eudicotyledons</taxon>
        <taxon>Gunneridae</taxon>
        <taxon>Pentapetalae</taxon>
        <taxon>rosids</taxon>
        <taxon>malvids</taxon>
        <taxon>Malvales</taxon>
        <taxon>Malvaceae</taxon>
        <taxon>Malvoideae</taxon>
        <taxon>Gossypium</taxon>
    </lineage>
</organism>
<reference key="1">
    <citation type="journal article" date="2006" name="Genes Genet. Syst.">
        <title>Complete nucleotide sequence of the cotton (Gossypium barbadense L.) chloroplast genome with a comparative analysis of sequences among 9 dicot plants.</title>
        <authorList>
            <person name="Ibrahim R.I.H."/>
            <person name="Azuma J."/>
            <person name="Sakamoto M."/>
        </authorList>
    </citation>
    <scope>NUCLEOTIDE SEQUENCE [LARGE SCALE GENOMIC DNA]</scope>
</reference>
<geneLocation type="chloroplast"/>
<name>RR7_GOSBA</name>
<evidence type="ECO:0000250" key="1"/>
<evidence type="ECO:0000255" key="2">
    <source>
        <dbReference type="HAMAP-Rule" id="MF_00480"/>
    </source>
</evidence>
<evidence type="ECO:0000305" key="3"/>
<proteinExistence type="inferred from homology"/>
<gene>
    <name type="primary">rps7-A</name>
</gene>
<gene>
    <name type="primary">rps7-B</name>
</gene>
<comment type="function">
    <text evidence="1">One of the primary rRNA binding proteins, it binds directly to 16S rRNA where it nucleates assembly of the head domain of the 30S subunit.</text>
</comment>
<comment type="subunit">
    <text>Part of the 30S ribosomal subunit.</text>
</comment>
<comment type="subcellular location">
    <subcellularLocation>
        <location>Plastid</location>
        <location>Chloroplast</location>
    </subcellularLocation>
</comment>
<comment type="similarity">
    <text evidence="3">Belongs to the universal ribosomal protein uS7 family.</text>
</comment>
<sequence length="155" mass="17357">MSRRGTAEEKTAKSDPIYRNRLVNMLVNRILKHGKKSLAYQIIYRALKKIQQKTETNPLSVLRQAIRGVTPDIAVKARRVGGSTHQVPIEIGSTQGKALAIRWLLGASRKRPGRNMAFKLSSELVDAAKGSGDAIRKKEETHRMAEANRAFAHFR</sequence>
<accession>A0ZZ80</accession>
<dbReference type="EMBL" id="AP009123">
    <property type="protein sequence ID" value="BAF41292.1"/>
    <property type="molecule type" value="Genomic_DNA"/>
</dbReference>
<dbReference type="EMBL" id="AP009123">
    <property type="protein sequence ID" value="BAF41306.1"/>
    <property type="molecule type" value="Genomic_DNA"/>
</dbReference>
<dbReference type="SMR" id="A0ZZ80"/>
<dbReference type="iPTMnet" id="A0ZZ80"/>
<dbReference type="GO" id="GO:0009507">
    <property type="term" value="C:chloroplast"/>
    <property type="evidence" value="ECO:0007669"/>
    <property type="project" value="UniProtKB-SubCell"/>
</dbReference>
<dbReference type="GO" id="GO:0015935">
    <property type="term" value="C:small ribosomal subunit"/>
    <property type="evidence" value="ECO:0007669"/>
    <property type="project" value="InterPro"/>
</dbReference>
<dbReference type="GO" id="GO:0019843">
    <property type="term" value="F:rRNA binding"/>
    <property type="evidence" value="ECO:0007669"/>
    <property type="project" value="UniProtKB-UniRule"/>
</dbReference>
<dbReference type="GO" id="GO:0003735">
    <property type="term" value="F:structural constituent of ribosome"/>
    <property type="evidence" value="ECO:0007669"/>
    <property type="project" value="InterPro"/>
</dbReference>
<dbReference type="GO" id="GO:0006412">
    <property type="term" value="P:translation"/>
    <property type="evidence" value="ECO:0007669"/>
    <property type="project" value="UniProtKB-UniRule"/>
</dbReference>
<dbReference type="CDD" id="cd14871">
    <property type="entry name" value="uS7_Chloroplast"/>
    <property type="match status" value="1"/>
</dbReference>
<dbReference type="FunFam" id="1.10.455.10:FF:000001">
    <property type="entry name" value="30S ribosomal protein S7"/>
    <property type="match status" value="1"/>
</dbReference>
<dbReference type="Gene3D" id="1.10.455.10">
    <property type="entry name" value="Ribosomal protein S7 domain"/>
    <property type="match status" value="1"/>
</dbReference>
<dbReference type="HAMAP" id="MF_00480_B">
    <property type="entry name" value="Ribosomal_uS7_B"/>
    <property type="match status" value="1"/>
</dbReference>
<dbReference type="InterPro" id="IPR000235">
    <property type="entry name" value="Ribosomal_uS7"/>
</dbReference>
<dbReference type="InterPro" id="IPR005717">
    <property type="entry name" value="Ribosomal_uS7_bac/org-type"/>
</dbReference>
<dbReference type="InterPro" id="IPR020606">
    <property type="entry name" value="Ribosomal_uS7_CS"/>
</dbReference>
<dbReference type="InterPro" id="IPR023798">
    <property type="entry name" value="Ribosomal_uS7_dom"/>
</dbReference>
<dbReference type="InterPro" id="IPR036823">
    <property type="entry name" value="Ribosomal_uS7_dom_sf"/>
</dbReference>
<dbReference type="NCBIfam" id="TIGR01029">
    <property type="entry name" value="rpsG_bact"/>
    <property type="match status" value="1"/>
</dbReference>
<dbReference type="PANTHER" id="PTHR11205">
    <property type="entry name" value="RIBOSOMAL PROTEIN S7"/>
    <property type="match status" value="1"/>
</dbReference>
<dbReference type="Pfam" id="PF00177">
    <property type="entry name" value="Ribosomal_S7"/>
    <property type="match status" value="1"/>
</dbReference>
<dbReference type="PIRSF" id="PIRSF002122">
    <property type="entry name" value="RPS7p_RPS7a_RPS5e_RPS7o"/>
    <property type="match status" value="1"/>
</dbReference>
<dbReference type="SUPFAM" id="SSF47973">
    <property type="entry name" value="Ribosomal protein S7"/>
    <property type="match status" value="1"/>
</dbReference>
<dbReference type="PROSITE" id="PS00052">
    <property type="entry name" value="RIBOSOMAL_S7"/>
    <property type="match status" value="1"/>
</dbReference>